<sequence length="137" mass="15501">MMQPKRTKFRKQFKGRIHGNSKGGTDLNFGAFGLKALEPERVTARQIEAARRAITRHMKRAGRVWIRIFPDLPVTSKPTEVRMGKGKGSVDYWACRVAPGRVMFELDGVPEDVAREALRLGAAKLPIKTRFIQRIAE</sequence>
<accession>A9M5P3</accession>
<name>RL16_BRUC2</name>
<comment type="function">
    <text evidence="1">Binds 23S rRNA and is also seen to make contacts with the A and possibly P site tRNAs.</text>
</comment>
<comment type="subunit">
    <text evidence="1">Part of the 50S ribosomal subunit.</text>
</comment>
<comment type="similarity">
    <text evidence="1">Belongs to the universal ribosomal protein uL16 family.</text>
</comment>
<organism>
    <name type="scientific">Brucella canis (strain ATCC 23365 / NCTC 10854 / RM-666)</name>
    <dbReference type="NCBI Taxonomy" id="483179"/>
    <lineage>
        <taxon>Bacteria</taxon>
        <taxon>Pseudomonadati</taxon>
        <taxon>Pseudomonadota</taxon>
        <taxon>Alphaproteobacteria</taxon>
        <taxon>Hyphomicrobiales</taxon>
        <taxon>Brucellaceae</taxon>
        <taxon>Brucella/Ochrobactrum group</taxon>
        <taxon>Brucella</taxon>
    </lineage>
</organism>
<evidence type="ECO:0000255" key="1">
    <source>
        <dbReference type="HAMAP-Rule" id="MF_01342"/>
    </source>
</evidence>
<evidence type="ECO:0000305" key="2"/>
<keyword id="KW-1185">Reference proteome</keyword>
<keyword id="KW-0687">Ribonucleoprotein</keyword>
<keyword id="KW-0689">Ribosomal protein</keyword>
<keyword id="KW-0694">RNA-binding</keyword>
<keyword id="KW-0699">rRNA-binding</keyword>
<keyword id="KW-0820">tRNA-binding</keyword>
<gene>
    <name evidence="1" type="primary">rplP</name>
    <name type="ordered locus">BCAN_A1249</name>
</gene>
<proteinExistence type="inferred from homology"/>
<protein>
    <recommendedName>
        <fullName evidence="1">Large ribosomal subunit protein uL16</fullName>
    </recommendedName>
    <alternativeName>
        <fullName evidence="2">50S ribosomal protein L16</fullName>
    </alternativeName>
</protein>
<feature type="chain" id="PRO_1000086743" description="Large ribosomal subunit protein uL16">
    <location>
        <begin position="1"/>
        <end position="137"/>
    </location>
</feature>
<reference key="1">
    <citation type="submission" date="2007-10" db="EMBL/GenBank/DDBJ databases">
        <title>Brucella canis ATCC 23365 whole genome shotgun sequencing project.</title>
        <authorList>
            <person name="Setubal J.C."/>
            <person name="Bowns C."/>
            <person name="Boyle S."/>
            <person name="Crasta O.R."/>
            <person name="Czar M.J."/>
            <person name="Dharmanolla C."/>
            <person name="Gillespie J.J."/>
            <person name="Kenyon R.W."/>
            <person name="Lu J."/>
            <person name="Mane S."/>
            <person name="Mohapatra S."/>
            <person name="Nagrani S."/>
            <person name="Purkayastha A."/>
            <person name="Rajasimha H.K."/>
            <person name="Shallom J.M."/>
            <person name="Shallom S."/>
            <person name="Shukla M."/>
            <person name="Snyder E.E."/>
            <person name="Sobral B.W."/>
            <person name="Wattam A.R."/>
            <person name="Will R."/>
            <person name="Williams K."/>
            <person name="Yoo H."/>
            <person name="Bruce D."/>
            <person name="Detter C."/>
            <person name="Munk C."/>
            <person name="Brettin T.S."/>
        </authorList>
    </citation>
    <scope>NUCLEOTIDE SEQUENCE [LARGE SCALE GENOMIC DNA]</scope>
    <source>
        <strain>ATCC 23365 / NCTC 10854 / RM-666</strain>
    </source>
</reference>
<dbReference type="EMBL" id="CP000872">
    <property type="protein sequence ID" value="ABX62298.1"/>
    <property type="molecule type" value="Genomic_DNA"/>
</dbReference>
<dbReference type="RefSeq" id="WP_002964355.1">
    <property type="nucleotide sequence ID" value="NC_010103.1"/>
</dbReference>
<dbReference type="SMR" id="A9M5P3"/>
<dbReference type="GeneID" id="97533531"/>
<dbReference type="KEGG" id="bcs:BCAN_A1249"/>
<dbReference type="HOGENOM" id="CLU_078858_2_1_5"/>
<dbReference type="PhylomeDB" id="A9M5P3"/>
<dbReference type="Proteomes" id="UP000001385">
    <property type="component" value="Chromosome I"/>
</dbReference>
<dbReference type="GO" id="GO:0022625">
    <property type="term" value="C:cytosolic large ribosomal subunit"/>
    <property type="evidence" value="ECO:0007669"/>
    <property type="project" value="TreeGrafter"/>
</dbReference>
<dbReference type="GO" id="GO:0019843">
    <property type="term" value="F:rRNA binding"/>
    <property type="evidence" value="ECO:0007669"/>
    <property type="project" value="UniProtKB-UniRule"/>
</dbReference>
<dbReference type="GO" id="GO:0003735">
    <property type="term" value="F:structural constituent of ribosome"/>
    <property type="evidence" value="ECO:0007669"/>
    <property type="project" value="InterPro"/>
</dbReference>
<dbReference type="GO" id="GO:0000049">
    <property type="term" value="F:tRNA binding"/>
    <property type="evidence" value="ECO:0007669"/>
    <property type="project" value="UniProtKB-KW"/>
</dbReference>
<dbReference type="GO" id="GO:0006412">
    <property type="term" value="P:translation"/>
    <property type="evidence" value="ECO:0007669"/>
    <property type="project" value="UniProtKB-UniRule"/>
</dbReference>
<dbReference type="CDD" id="cd01433">
    <property type="entry name" value="Ribosomal_L16_L10e"/>
    <property type="match status" value="1"/>
</dbReference>
<dbReference type="FunFam" id="3.90.1170.10:FF:000001">
    <property type="entry name" value="50S ribosomal protein L16"/>
    <property type="match status" value="1"/>
</dbReference>
<dbReference type="Gene3D" id="3.90.1170.10">
    <property type="entry name" value="Ribosomal protein L10e/L16"/>
    <property type="match status" value="1"/>
</dbReference>
<dbReference type="HAMAP" id="MF_01342">
    <property type="entry name" value="Ribosomal_uL16"/>
    <property type="match status" value="1"/>
</dbReference>
<dbReference type="InterPro" id="IPR047873">
    <property type="entry name" value="Ribosomal_uL16"/>
</dbReference>
<dbReference type="InterPro" id="IPR000114">
    <property type="entry name" value="Ribosomal_uL16_bact-type"/>
</dbReference>
<dbReference type="InterPro" id="IPR020798">
    <property type="entry name" value="Ribosomal_uL16_CS"/>
</dbReference>
<dbReference type="InterPro" id="IPR016180">
    <property type="entry name" value="Ribosomal_uL16_dom"/>
</dbReference>
<dbReference type="InterPro" id="IPR036920">
    <property type="entry name" value="Ribosomal_uL16_sf"/>
</dbReference>
<dbReference type="NCBIfam" id="TIGR01164">
    <property type="entry name" value="rplP_bact"/>
    <property type="match status" value="1"/>
</dbReference>
<dbReference type="PANTHER" id="PTHR12220">
    <property type="entry name" value="50S/60S RIBOSOMAL PROTEIN L16"/>
    <property type="match status" value="1"/>
</dbReference>
<dbReference type="PANTHER" id="PTHR12220:SF13">
    <property type="entry name" value="LARGE RIBOSOMAL SUBUNIT PROTEIN UL16M"/>
    <property type="match status" value="1"/>
</dbReference>
<dbReference type="Pfam" id="PF00252">
    <property type="entry name" value="Ribosomal_L16"/>
    <property type="match status" value="1"/>
</dbReference>
<dbReference type="PRINTS" id="PR00060">
    <property type="entry name" value="RIBOSOMALL16"/>
</dbReference>
<dbReference type="SUPFAM" id="SSF54686">
    <property type="entry name" value="Ribosomal protein L16p/L10e"/>
    <property type="match status" value="1"/>
</dbReference>
<dbReference type="PROSITE" id="PS00586">
    <property type="entry name" value="RIBOSOMAL_L16_1"/>
    <property type="match status" value="1"/>
</dbReference>
<dbReference type="PROSITE" id="PS00701">
    <property type="entry name" value="RIBOSOMAL_L16_2"/>
    <property type="match status" value="1"/>
</dbReference>